<name>HIS4_MYCBO</name>
<sequence length="245" mass="25763">MMPLILLPAVDVVEGRAVRLVQGKAGSQTEYGSAVDAALGWQRDGAEWIHLVDLDAAFGRGSNHELLAEVVGKLDVQVELSGGIRDDESLAAALATGCARVNVGTAALENPQWCARVIGEHGDQVAVGLDVQIIDGEHRLRGRGWETDGGDLWDVLERLDSEGCSRFVVTDITKDGTLGGPNLDLLAGVADRTDAPVIASGGVSSLDDLRAIATLTHRGVEGAIVGKALYARRFTLPQALAAVRD</sequence>
<organism>
    <name type="scientific">Mycobacterium bovis (strain ATCC BAA-935 / AF2122/97)</name>
    <dbReference type="NCBI Taxonomy" id="233413"/>
    <lineage>
        <taxon>Bacteria</taxon>
        <taxon>Bacillati</taxon>
        <taxon>Actinomycetota</taxon>
        <taxon>Actinomycetes</taxon>
        <taxon>Mycobacteriales</taxon>
        <taxon>Mycobacteriaceae</taxon>
        <taxon>Mycobacterium</taxon>
        <taxon>Mycobacterium tuberculosis complex</taxon>
    </lineage>
</organism>
<dbReference type="EC" id="5.3.1.16"/>
<dbReference type="EC" id="5.3.1.24"/>
<dbReference type="EMBL" id="LT708304">
    <property type="protein sequence ID" value="SIU00233.1"/>
    <property type="molecule type" value="Genomic_DNA"/>
</dbReference>
<dbReference type="RefSeq" id="NP_855282.1">
    <property type="nucleotide sequence ID" value="NC_002945.3"/>
</dbReference>
<dbReference type="RefSeq" id="WP_003900374.1">
    <property type="nucleotide sequence ID" value="NC_002945.4"/>
</dbReference>
<dbReference type="SMR" id="P60579"/>
<dbReference type="KEGG" id="mbo:BQ2027_MB1629"/>
<dbReference type="PATRIC" id="fig|233413.5.peg.1778"/>
<dbReference type="UniPathway" id="UPA00031">
    <property type="reaction ID" value="UER00009"/>
</dbReference>
<dbReference type="UniPathway" id="UPA00035">
    <property type="reaction ID" value="UER00042"/>
</dbReference>
<dbReference type="Proteomes" id="UP000001419">
    <property type="component" value="Chromosome"/>
</dbReference>
<dbReference type="GO" id="GO:0005737">
    <property type="term" value="C:cytoplasm"/>
    <property type="evidence" value="ECO:0007669"/>
    <property type="project" value="UniProtKB-SubCell"/>
</dbReference>
<dbReference type="GO" id="GO:0003949">
    <property type="term" value="F:1-(5-phosphoribosyl)-5-[(5-phosphoribosylamino)methylideneamino]imidazole-4-carboxamide isomerase activity"/>
    <property type="evidence" value="ECO:0007669"/>
    <property type="project" value="UniProtKB-UniRule"/>
</dbReference>
<dbReference type="GO" id="GO:0004640">
    <property type="term" value="F:phosphoribosylanthranilate isomerase activity"/>
    <property type="evidence" value="ECO:0007669"/>
    <property type="project" value="UniProtKB-UniRule"/>
</dbReference>
<dbReference type="GO" id="GO:0000105">
    <property type="term" value="P:L-histidine biosynthetic process"/>
    <property type="evidence" value="ECO:0007669"/>
    <property type="project" value="UniProtKB-UniRule"/>
</dbReference>
<dbReference type="GO" id="GO:0000162">
    <property type="term" value="P:L-tryptophan biosynthetic process"/>
    <property type="evidence" value="ECO:0007669"/>
    <property type="project" value="UniProtKB-UniRule"/>
</dbReference>
<dbReference type="CDD" id="cd04732">
    <property type="entry name" value="HisA"/>
    <property type="match status" value="1"/>
</dbReference>
<dbReference type="FunFam" id="3.20.20.70:FF:000009">
    <property type="entry name" value="1-(5-phosphoribosyl)-5-[(5-phosphoribosylamino)methylideneamino] imidazole-4-carboxamide isomerase"/>
    <property type="match status" value="1"/>
</dbReference>
<dbReference type="Gene3D" id="3.20.20.70">
    <property type="entry name" value="Aldolase class I"/>
    <property type="match status" value="1"/>
</dbReference>
<dbReference type="HAMAP" id="MF_01014">
    <property type="entry name" value="HisA"/>
    <property type="match status" value="1"/>
</dbReference>
<dbReference type="InterPro" id="IPR013785">
    <property type="entry name" value="Aldolase_TIM"/>
</dbReference>
<dbReference type="InterPro" id="IPR006062">
    <property type="entry name" value="His_biosynth"/>
</dbReference>
<dbReference type="InterPro" id="IPR010188">
    <property type="entry name" value="HisA/PriA_Actinobacteria"/>
</dbReference>
<dbReference type="InterPro" id="IPR044524">
    <property type="entry name" value="Isoase_HisA-like"/>
</dbReference>
<dbReference type="InterPro" id="IPR023016">
    <property type="entry name" value="Isoase_HisA-like_bact"/>
</dbReference>
<dbReference type="InterPro" id="IPR011060">
    <property type="entry name" value="RibuloseP-bd_barrel"/>
</dbReference>
<dbReference type="NCBIfam" id="TIGR01919">
    <property type="entry name" value="hisA-trpF"/>
    <property type="match status" value="1"/>
</dbReference>
<dbReference type="PANTHER" id="PTHR43090">
    <property type="entry name" value="1-(5-PHOSPHORIBOSYL)-5-[(5-PHOSPHORIBOSYLAMINO)METHYLIDENEAMINO] IMIDAZOLE-4-CARBOXAMIDE ISOMERASE"/>
    <property type="match status" value="1"/>
</dbReference>
<dbReference type="PANTHER" id="PTHR43090:SF2">
    <property type="entry name" value="1-(5-PHOSPHORIBOSYL)-5-[(5-PHOSPHORIBOSYLAMINO)METHYLIDENEAMINO] IMIDAZOLE-4-CARBOXAMIDE ISOMERASE"/>
    <property type="match status" value="1"/>
</dbReference>
<dbReference type="Pfam" id="PF00977">
    <property type="entry name" value="His_biosynth"/>
    <property type="match status" value="1"/>
</dbReference>
<dbReference type="SUPFAM" id="SSF51366">
    <property type="entry name" value="Ribulose-phoshate binding barrel"/>
    <property type="match status" value="1"/>
</dbReference>
<reference key="1">
    <citation type="journal article" date="2003" name="Proc. Natl. Acad. Sci. U.S.A.">
        <title>The complete genome sequence of Mycobacterium bovis.</title>
        <authorList>
            <person name="Garnier T."/>
            <person name="Eiglmeier K."/>
            <person name="Camus J.-C."/>
            <person name="Medina N."/>
            <person name="Mansoor H."/>
            <person name="Pryor M."/>
            <person name="Duthoy S."/>
            <person name="Grondin S."/>
            <person name="Lacroix C."/>
            <person name="Monsempe C."/>
            <person name="Simon S."/>
            <person name="Harris B."/>
            <person name="Atkin R."/>
            <person name="Doggett J."/>
            <person name="Mayes R."/>
            <person name="Keating L."/>
            <person name="Wheeler P.R."/>
            <person name="Parkhill J."/>
            <person name="Barrell B.G."/>
            <person name="Cole S.T."/>
            <person name="Gordon S.V."/>
            <person name="Hewinson R.G."/>
        </authorList>
    </citation>
    <scope>NUCLEOTIDE SEQUENCE [LARGE SCALE GENOMIC DNA]</scope>
    <source>
        <strain>ATCC BAA-935 / AF2122/97</strain>
    </source>
</reference>
<reference key="2">
    <citation type="journal article" date="2017" name="Genome Announc.">
        <title>Updated reference genome sequence and annotation of Mycobacterium bovis AF2122/97.</title>
        <authorList>
            <person name="Malone K.M."/>
            <person name="Farrell D."/>
            <person name="Stuber T.P."/>
            <person name="Schubert O.T."/>
            <person name="Aebersold R."/>
            <person name="Robbe-Austerman S."/>
            <person name="Gordon S.V."/>
        </authorList>
    </citation>
    <scope>NUCLEOTIDE SEQUENCE [LARGE SCALE GENOMIC DNA]</scope>
    <scope>GENOME REANNOTATION</scope>
    <source>
        <strain>ATCC BAA-935 / AF2122/97</strain>
    </source>
</reference>
<proteinExistence type="inferred from homology"/>
<feature type="chain" id="PRO_0000142082" description="Phosphoribosyl isomerase A">
    <location>
        <begin position="1"/>
        <end position="245"/>
    </location>
</feature>
<feature type="active site" description="Proton acceptor" evidence="1">
    <location>
        <position position="11"/>
    </location>
</feature>
<feature type="active site" description="Proton donor" evidence="1">
    <location>
        <position position="130"/>
    </location>
</feature>
<accession>P60579</accession>
<accession>A0A1R3Y0X7</accession>
<accession>O06588</accession>
<accession>X2BIN3</accession>
<gene>
    <name type="primary">priA</name>
    <name type="synonym">hisA</name>
    <name type="ordered locus">BQ2027_MB1629</name>
</gene>
<comment type="function">
    <text evidence="1">Involved in both the histidine and tryptophan biosynthetic pathways.</text>
</comment>
<comment type="catalytic activity">
    <reaction>
        <text>1-(5-phospho-beta-D-ribosyl)-5-[(5-phospho-beta-D-ribosylamino)methylideneamino]imidazole-4-carboxamide = 5-[(5-phospho-1-deoxy-D-ribulos-1-ylimino)methylamino]-1-(5-phospho-beta-D-ribosyl)imidazole-4-carboxamide</text>
        <dbReference type="Rhea" id="RHEA:15469"/>
        <dbReference type="ChEBI" id="CHEBI:58435"/>
        <dbReference type="ChEBI" id="CHEBI:58525"/>
        <dbReference type="EC" id="5.3.1.16"/>
    </reaction>
</comment>
<comment type="catalytic activity">
    <reaction>
        <text>N-(5-phospho-beta-D-ribosyl)anthranilate = 1-(2-carboxyphenylamino)-1-deoxy-D-ribulose 5-phosphate</text>
        <dbReference type="Rhea" id="RHEA:21540"/>
        <dbReference type="ChEBI" id="CHEBI:18277"/>
        <dbReference type="ChEBI" id="CHEBI:58613"/>
        <dbReference type="EC" id="5.3.1.24"/>
    </reaction>
</comment>
<comment type="pathway">
    <text>Amino-acid biosynthesis; L-histidine biosynthesis; L-histidine from 5-phospho-alpha-D-ribose 1-diphosphate: step 4/9.</text>
</comment>
<comment type="pathway">
    <text>Amino-acid biosynthesis; L-tryptophan biosynthesis; L-tryptophan from chorismate: step 3/5.</text>
</comment>
<comment type="subcellular location">
    <subcellularLocation>
        <location evidence="1">Cytoplasm</location>
    </subcellularLocation>
</comment>
<comment type="similarity">
    <text evidence="2">Belongs to the HisA/HisF family.</text>
</comment>
<evidence type="ECO:0000250" key="1"/>
<evidence type="ECO:0000305" key="2"/>
<keyword id="KW-0028">Amino-acid biosynthesis</keyword>
<keyword id="KW-0057">Aromatic amino acid biosynthesis</keyword>
<keyword id="KW-0963">Cytoplasm</keyword>
<keyword id="KW-0368">Histidine biosynthesis</keyword>
<keyword id="KW-0413">Isomerase</keyword>
<keyword id="KW-1185">Reference proteome</keyword>
<keyword id="KW-0822">Tryptophan biosynthesis</keyword>
<protein>
    <recommendedName>
        <fullName>Phosphoribosyl isomerase A</fullName>
    </recommendedName>
    <alternativeName>
        <fullName>1-(5-phosphoribosyl)-5-[(5-phosphoribosylamino)methylideneamino] imidazole-4-carboxamide isomerase</fullName>
        <ecNumber>5.3.1.16</ecNumber>
    </alternativeName>
    <alternativeName>
        <fullName>N-(5'-phosphoribosyl)anthranilate isomerase</fullName>
        <shortName>PRAI</shortName>
        <ecNumber>5.3.1.24</ecNumber>
    </alternativeName>
    <alternativeName>
        <fullName>Phosphoribosylformimino-5-aminoimidazole carboxamide ribotide isomerase</fullName>
    </alternativeName>
</protein>